<proteinExistence type="evidence at protein level"/>
<name>NSP2_MEDTR</name>
<reference key="1">
    <citation type="journal article" date="2005" name="Science">
        <title>Nodulation signaling in legumes requires NSP2, a member of the GRAS family of transcriptional regulators.</title>
        <authorList>
            <person name="Kalo P."/>
            <person name="Gleason C."/>
            <person name="Edwards A."/>
            <person name="Marsh J."/>
            <person name="Mitra R.M."/>
            <person name="Hirsch S."/>
            <person name="Jakab J."/>
            <person name="Sims S."/>
            <person name="Long S.R."/>
            <person name="Rogers J."/>
            <person name="Kiss G.B."/>
            <person name="Downie J.A."/>
            <person name="Oldroyd G.E.D."/>
        </authorList>
    </citation>
    <scope>NUCLEOTIDE SEQUENCE [GENOMIC DNA]</scope>
    <scope>FUNCTION</scope>
    <scope>MUTAGENESIS OF 160-ARG--PRO-304</scope>
    <scope>TISSUE SPECIFICITY</scope>
    <scope>INDUCTION</scope>
    <scope>SUBCELLULAR LOCATION</scope>
</reference>
<reference key="2">
    <citation type="journal article" date="2000" name="Plant Cell">
        <title>Four genes of Medicago truncatula controlling components of a nod factor transduction pathway.</title>
        <authorList>
            <person name="Catoira R."/>
            <person name="Galera C."/>
            <person name="de Billy F."/>
            <person name="Penmetsa R.V."/>
            <person name="Journet E.-P."/>
            <person name="Maillet F."/>
            <person name="Rosenberg C."/>
            <person name="Cook D."/>
            <person name="Gough C."/>
            <person name="Denarie J."/>
        </authorList>
    </citation>
    <scope>IDENTIFICATION</scope>
    <scope>MUTAGENESIS OF GLU-232</scope>
    <source>
        <strain>cv. Jemalong A17</strain>
    </source>
</reference>
<reference key="3">
    <citation type="journal article" date="2003" name="Plant Physiol.">
        <title>Identification and characterization of nodulation-signaling pathway 2, a gene of Medicago truncatula involved in Nod actor signaling.</title>
        <authorList>
            <person name="Oldroyd G.E.D."/>
            <person name="Long S.R."/>
        </authorList>
    </citation>
    <scope>IDENTIFICATION</scope>
</reference>
<reference key="4">
    <citation type="journal article" date="2011" name="Nature">
        <title>The Medicago genome provides insight into the evolution of rhizobial symbioses.</title>
        <authorList>
            <person name="Young N.D."/>
            <person name="Debelle F."/>
            <person name="Oldroyd G.E.D."/>
            <person name="Geurts R."/>
            <person name="Cannon S.B."/>
            <person name="Udvardi M.K."/>
            <person name="Benedito V.A."/>
            <person name="Mayer K.F.X."/>
            <person name="Gouzy J."/>
            <person name="Schoof H."/>
            <person name="Van de Peer Y."/>
            <person name="Proost S."/>
            <person name="Cook D.R."/>
            <person name="Meyers B.C."/>
            <person name="Spannagl M."/>
            <person name="Cheung F."/>
            <person name="De Mita S."/>
            <person name="Krishnakumar V."/>
            <person name="Gundlach H."/>
            <person name="Zhou S."/>
            <person name="Mudge J."/>
            <person name="Bharti A.K."/>
            <person name="Murray J.D."/>
            <person name="Naoumkina M.A."/>
            <person name="Rosen B."/>
            <person name="Silverstein K.A.T."/>
            <person name="Tang H."/>
            <person name="Rombauts S."/>
            <person name="Zhao P.X."/>
            <person name="Zhou P."/>
            <person name="Barbe V."/>
            <person name="Bardou P."/>
            <person name="Bechner M."/>
            <person name="Bellec A."/>
            <person name="Berger A."/>
            <person name="Berges H."/>
            <person name="Bidwell S."/>
            <person name="Bisseling T."/>
            <person name="Choisne N."/>
            <person name="Couloux A."/>
            <person name="Denny R."/>
            <person name="Deshpande S."/>
            <person name="Dai X."/>
            <person name="Doyle J.J."/>
            <person name="Dudez A.-M."/>
            <person name="Farmer A.D."/>
            <person name="Fouteau S."/>
            <person name="Franken C."/>
            <person name="Gibelin C."/>
            <person name="Gish J."/>
            <person name="Goldstein S."/>
            <person name="Gonzalez A.J."/>
            <person name="Green P.J."/>
            <person name="Hallab A."/>
            <person name="Hartog M."/>
            <person name="Hua A."/>
            <person name="Humphray S.J."/>
            <person name="Jeong D.-H."/>
            <person name="Jing Y."/>
            <person name="Jocker A."/>
            <person name="Kenton S.M."/>
            <person name="Kim D.-J."/>
            <person name="Klee K."/>
            <person name="Lai H."/>
            <person name="Lang C."/>
            <person name="Lin S."/>
            <person name="Macmil S.L."/>
            <person name="Magdelenat G."/>
            <person name="Matthews L."/>
            <person name="McCorrison J."/>
            <person name="Monaghan E.L."/>
            <person name="Mun J.-H."/>
            <person name="Najar F.Z."/>
            <person name="Nicholson C."/>
            <person name="Noirot C."/>
            <person name="O'Bleness M."/>
            <person name="Paule C.R."/>
            <person name="Poulain J."/>
            <person name="Prion F."/>
            <person name="Qin B."/>
            <person name="Qu C."/>
            <person name="Retzel E.F."/>
            <person name="Riddle C."/>
            <person name="Sallet E."/>
            <person name="Samain S."/>
            <person name="Samson N."/>
            <person name="Sanders I."/>
            <person name="Saurat O."/>
            <person name="Scarpelli C."/>
            <person name="Schiex T."/>
            <person name="Segurens B."/>
            <person name="Severin A.J."/>
            <person name="Sherrier D.J."/>
            <person name="Shi R."/>
            <person name="Sims S."/>
            <person name="Singer S.R."/>
            <person name="Sinharoy S."/>
            <person name="Sterck L."/>
            <person name="Viollet A."/>
            <person name="Wang B.-B."/>
            <person name="Wang K."/>
            <person name="Wang M."/>
            <person name="Wang X."/>
            <person name="Warfsmann J."/>
            <person name="Weissenbach J."/>
            <person name="White D.D."/>
            <person name="White J.D."/>
            <person name="Wiley G.B."/>
            <person name="Wincker P."/>
            <person name="Xing Y."/>
            <person name="Yang L."/>
            <person name="Yao Z."/>
            <person name="Ying F."/>
            <person name="Zhai J."/>
            <person name="Zhou L."/>
            <person name="Zuber A."/>
            <person name="Denarie J."/>
            <person name="Dixon R.A."/>
            <person name="May G.D."/>
            <person name="Schwartz D.C."/>
            <person name="Rogers J."/>
            <person name="Quetier F."/>
            <person name="Town C.D."/>
            <person name="Roe B.A."/>
        </authorList>
    </citation>
    <scope>NUCLEOTIDE SEQUENCE [LARGE SCALE GENOMIC DNA]</scope>
    <source>
        <strain>cv. Jemalong A17</strain>
    </source>
</reference>
<reference key="5">
    <citation type="journal article" date="2014" name="BMC Genomics">
        <title>An improved genome release (version Mt4.0) for the model legume Medicago truncatula.</title>
        <authorList>
            <person name="Tang H."/>
            <person name="Krishnakumar V."/>
            <person name="Bidwell S."/>
            <person name="Rosen B."/>
            <person name="Chan A."/>
            <person name="Zhou S."/>
            <person name="Gentzbittel L."/>
            <person name="Childs K.L."/>
            <person name="Yandell M."/>
            <person name="Gundlach H."/>
            <person name="Mayer K.F."/>
            <person name="Schwartz D.C."/>
            <person name="Town C.D."/>
        </authorList>
    </citation>
    <scope>GENOME REANNOTATION</scope>
    <source>
        <strain>cv. Jemalong A17</strain>
    </source>
</reference>
<reference key="6">
    <citation type="journal article" date="2011" name="Plant Cell">
        <title>Strigolactone biosynthesis in Medicago truncatula and rice requires the symbiotic GRAS-type transcription factors NSP1 and NSP2.</title>
        <authorList>
            <person name="Liu W."/>
            <person name="Kohlen W."/>
            <person name="Lillo A."/>
            <person name="Op den Camp R."/>
            <person name="Ivanov S."/>
            <person name="Hartog M."/>
            <person name="Limpens E."/>
            <person name="Jamil M."/>
            <person name="Smaczniak C."/>
            <person name="Kaufmann K."/>
            <person name="Yang W.C."/>
            <person name="Hooiveld G.J."/>
            <person name="Charnikhova T."/>
            <person name="Bouwmeester H.J."/>
            <person name="Bisseling T."/>
            <person name="Geurts R."/>
        </authorList>
    </citation>
    <scope>FUNCTION</scope>
    <scope>TISSUE SPECIFICITY</scope>
</reference>
<reference key="7">
    <citation type="journal article" date="2015" name="BMC Plant Biol.">
        <title>The strigolactone biosynthesis gene DWARF27 is co-opted in rhizobium symbiosis.</title>
        <authorList>
            <person name="van Zeijl A."/>
            <person name="Liu W."/>
            <person name="Xiao T.T."/>
            <person name="Kohlen W."/>
            <person name="Yang W.C."/>
            <person name="Bisseling T."/>
            <person name="Geurts R."/>
        </authorList>
    </citation>
    <scope>FUNCTION</scope>
</reference>
<reference key="8">
    <citation type="journal article" date="2015" name="Plant Physiol.">
        <title>Hyphal branching during arbuscule development requires reduced arbuscular mycorrhiza1.</title>
        <authorList>
            <person name="Park H.-J."/>
            <person name="Floss D.S."/>
            <person name="Levesque-Tremblay V."/>
            <person name="Bravo A."/>
            <person name="Harrison M.J."/>
        </authorList>
    </citation>
    <scope>INTERACTION WITH RAM1</scope>
</reference>
<feature type="chain" id="PRO_0000132233" description="Protein NODULATION SIGNALING PATHWAY 2">
    <location>
        <begin position="1"/>
        <end position="508"/>
    </location>
</feature>
<feature type="domain" description="GRAS" evidence="2">
    <location>
        <begin position="108"/>
        <end position="500"/>
    </location>
</feature>
<feature type="region of interest" description="Disordered" evidence="3">
    <location>
        <begin position="75"/>
        <end position="98"/>
    </location>
</feature>
<feature type="region of interest" description="Leucine repeat I (LRI)" evidence="2">
    <location>
        <begin position="115"/>
        <end position="190"/>
    </location>
</feature>
<feature type="region of interest" description="VHIID" evidence="2">
    <location>
        <begin position="209"/>
        <end position="273"/>
    </location>
</feature>
<feature type="region of interest" description="Leucine repeat II (LRII)" evidence="2">
    <location>
        <begin position="289"/>
        <end position="321"/>
    </location>
</feature>
<feature type="region of interest" description="PFYRE" evidence="2">
    <location>
        <begin position="331"/>
        <end position="422"/>
    </location>
</feature>
<feature type="region of interest" description="SAW" evidence="2">
    <location>
        <begin position="425"/>
        <end position="500"/>
    </location>
</feature>
<feature type="short sequence motif" description="VHIID" evidence="2">
    <location>
        <begin position="240"/>
        <end position="244"/>
    </location>
</feature>
<feature type="mutagenesis site" description="In nsp2-1 and nsp2-2; loss of nodulation." evidence="5">
    <location>
        <begin position="160"/>
        <end position="304"/>
    </location>
</feature>
<feature type="mutagenesis site" description="In nsp2-3; decreased size and number of nodules." evidence="4">
    <original>E</original>
    <variation>K</variation>
    <location>
        <position position="232"/>
    </location>
</feature>
<sequence>MDLMDMDAINDLHFSGHSSLTNTPTSDEDYGCTWNHWSPIVNWDTFTGAPDDFHHLMDTIIEDRTTVLEQLSPSITTTTTTTTTTDEEEEEMETTTTTTTTAIKTHEVGDDSKGLKLVHLLMAGAEALTGSTKNRDLARVILIRLKELVSQHANGSNMERLAAHFTEALHGLLEGAGGAHNNHHHHNNNKHYLTTNGPHDNQNDTLAAFQLLQDMSPYVKFGHFTANQAIIEAVAHERRVHVIDYDIMEGVQWASLIQSLASNNNGPHLRITALSRTGTGRRSIATVQETGRRLTSFAASLGQPFSFHHCRLDSDETFRPSALKLVRGEALVFNCMLNLPHLSYRAPESVASFLNGAKTLNPKLVTLVEEEVGSVIGGFVERFMDSLHHYSAVFDSLEAGFPMQNRARTLVERVFFGPRIAGSLGRIYRTGGEEERRSWGEWLGEVGFRGVPVSFANHCQAKLLLGLFNDGYRVEEVGVGSNKLVLDWKSRRLLSASLWTCSSSDSDL</sequence>
<gene>
    <name evidence="9" type="primary">NSP2</name>
    <name evidence="11" type="ordered locus">MTR_3g072710</name>
</gene>
<organism>
    <name type="scientific">Medicago truncatula</name>
    <name type="common">Barrel medic</name>
    <name type="synonym">Medicago tribuloides</name>
    <dbReference type="NCBI Taxonomy" id="3880"/>
    <lineage>
        <taxon>Eukaryota</taxon>
        <taxon>Viridiplantae</taxon>
        <taxon>Streptophyta</taxon>
        <taxon>Embryophyta</taxon>
        <taxon>Tracheophyta</taxon>
        <taxon>Spermatophyta</taxon>
        <taxon>Magnoliopsida</taxon>
        <taxon>eudicotyledons</taxon>
        <taxon>Gunneridae</taxon>
        <taxon>Pentapetalae</taxon>
        <taxon>rosids</taxon>
        <taxon>fabids</taxon>
        <taxon>Fabales</taxon>
        <taxon>Fabaceae</taxon>
        <taxon>Papilionoideae</taxon>
        <taxon>50 kb inversion clade</taxon>
        <taxon>NPAAA clade</taxon>
        <taxon>Hologalegina</taxon>
        <taxon>IRL clade</taxon>
        <taxon>Trifolieae</taxon>
        <taxon>Medicago</taxon>
    </lineage>
</organism>
<protein>
    <recommendedName>
        <fullName evidence="9">Protein NODULATION SIGNALING PATHWAY 2</fullName>
    </recommendedName>
</protein>
<dbReference type="EMBL" id="AJ832138">
    <property type="protein sequence ID" value="CAH55768.1"/>
    <property type="molecule type" value="Genomic_DNA"/>
</dbReference>
<dbReference type="EMBL" id="CM001219">
    <property type="protein sequence ID" value="AES71327.1"/>
    <property type="molecule type" value="Genomic_DNA"/>
</dbReference>
<dbReference type="RefSeq" id="XP_003601076.1">
    <property type="nucleotide sequence ID" value="XM_003601028.2"/>
</dbReference>
<dbReference type="SMR" id="Q5NE24"/>
<dbReference type="STRING" id="3880.Q5NE24"/>
<dbReference type="PaxDb" id="3880-AES71327"/>
<dbReference type="EnsemblPlants" id="rna16889">
    <property type="protein sequence ID" value="RHN68526.1"/>
    <property type="gene ID" value="gene16889"/>
</dbReference>
<dbReference type="GeneID" id="11406790"/>
<dbReference type="Gramene" id="rna16889">
    <property type="protein sequence ID" value="RHN68526.1"/>
    <property type="gene ID" value="gene16889"/>
</dbReference>
<dbReference type="KEGG" id="mtr:11406790"/>
<dbReference type="eggNOG" id="ENOG502R0MM">
    <property type="taxonomic scope" value="Eukaryota"/>
</dbReference>
<dbReference type="HOGENOM" id="CLU_011924_0_2_1"/>
<dbReference type="OMA" id="IMENDEP"/>
<dbReference type="OrthoDB" id="646981at2759"/>
<dbReference type="Proteomes" id="UP000002051">
    <property type="component" value="Chromosome 3"/>
</dbReference>
<dbReference type="GO" id="GO:0005783">
    <property type="term" value="C:endoplasmic reticulum"/>
    <property type="evidence" value="ECO:0007669"/>
    <property type="project" value="UniProtKB-SubCell"/>
</dbReference>
<dbReference type="GO" id="GO:0031965">
    <property type="term" value="C:nuclear membrane"/>
    <property type="evidence" value="ECO:0007669"/>
    <property type="project" value="UniProtKB-SubCell"/>
</dbReference>
<dbReference type="GO" id="GO:0005634">
    <property type="term" value="C:nucleus"/>
    <property type="evidence" value="ECO:0000318"/>
    <property type="project" value="GO_Central"/>
</dbReference>
<dbReference type="GO" id="GO:0003700">
    <property type="term" value="F:DNA-binding transcription factor activity"/>
    <property type="evidence" value="ECO:0000318"/>
    <property type="project" value="GO_Central"/>
</dbReference>
<dbReference type="GO" id="GO:0043565">
    <property type="term" value="F:sequence-specific DNA binding"/>
    <property type="evidence" value="ECO:0000318"/>
    <property type="project" value="GO_Central"/>
</dbReference>
<dbReference type="GO" id="GO:0009877">
    <property type="term" value="P:nodulation"/>
    <property type="evidence" value="ECO:0007669"/>
    <property type="project" value="UniProtKB-KW"/>
</dbReference>
<dbReference type="GO" id="GO:0006355">
    <property type="term" value="P:regulation of DNA-templated transcription"/>
    <property type="evidence" value="ECO:0000318"/>
    <property type="project" value="GO_Central"/>
</dbReference>
<dbReference type="GO" id="GO:0009610">
    <property type="term" value="P:response to symbiotic fungus"/>
    <property type="evidence" value="ECO:0007669"/>
    <property type="project" value="UniProtKB-ARBA"/>
</dbReference>
<dbReference type="InterPro" id="IPR005202">
    <property type="entry name" value="TF_GRAS"/>
</dbReference>
<dbReference type="PANTHER" id="PTHR31636">
    <property type="entry name" value="OSJNBA0084A10.13 PROTEIN-RELATED"/>
    <property type="match status" value="1"/>
</dbReference>
<dbReference type="Pfam" id="PF03514">
    <property type="entry name" value="GRAS"/>
    <property type="match status" value="1"/>
</dbReference>
<dbReference type="PROSITE" id="PS50985">
    <property type="entry name" value="GRAS"/>
    <property type="match status" value="1"/>
</dbReference>
<comment type="function">
    <text evidence="5 6 7">Transcriptional regulator essential for Nod-factor-induced gene expression (PubMed:15961668). Acts downstream of calcium spiking and DMI3, a calcium/calmodulin-dependent protein kinase (CCaMK) (PubMed:15961668). Transcription factor involved in the control of strigolactone biosynthesis in roots through the activation of the beta-carotene isomerase D27, which participates in a pathway leading to biosynthesis of strigolactones (PubMed:22039214, PubMed:26503135).</text>
</comment>
<comment type="subunit">
    <text evidence="1 8">Interacts with RAM1 (PubMed:26511916). Interacts with IPN2 and RAD1 (By similarity).</text>
</comment>
<comment type="subcellular location">
    <subcellularLocation>
        <location evidence="5">Nucleus membrane</location>
    </subcellularLocation>
    <subcellularLocation>
        <location evidence="5">Endoplasmic reticulum</location>
    </subcellularLocation>
    <text evidence="5">Mainly localized to the nuclear envelope. Also found in the endoplasmic reticulum. Upon Nod-factor application, the nuclear envelope localization disappears and the protein accumulates in the nucleus.</text>
</comment>
<comment type="tissue specificity">
    <text evidence="5">Expressed in roots, shoots and leaves.</text>
</comment>
<comment type="induction">
    <text evidence="5">Induced 24 hours after treatment with Nod factor or Sinorhizobium meliloti.</text>
</comment>
<comment type="similarity">
    <text evidence="10">Belongs to the GRAS family.</text>
</comment>
<evidence type="ECO:0000250" key="1">
    <source>
        <dbReference type="UniProtKB" id="Q2PEG7"/>
    </source>
</evidence>
<evidence type="ECO:0000255" key="2">
    <source>
        <dbReference type="PROSITE-ProRule" id="PRU01191"/>
    </source>
</evidence>
<evidence type="ECO:0000256" key="3">
    <source>
        <dbReference type="SAM" id="MobiDB-lite"/>
    </source>
</evidence>
<evidence type="ECO:0000269" key="4">
    <source>
    </source>
</evidence>
<evidence type="ECO:0000269" key="5">
    <source>
    </source>
</evidence>
<evidence type="ECO:0000269" key="6">
    <source>
    </source>
</evidence>
<evidence type="ECO:0000269" key="7">
    <source>
    </source>
</evidence>
<evidence type="ECO:0000269" key="8">
    <source>
    </source>
</evidence>
<evidence type="ECO:0000303" key="9">
    <source>
    </source>
</evidence>
<evidence type="ECO:0000305" key="10"/>
<evidence type="ECO:0000312" key="11">
    <source>
        <dbReference type="EMBL" id="AES71327.1"/>
    </source>
</evidence>
<accession>Q5NE24</accession>
<accession>G7J334</accession>
<keyword id="KW-0256">Endoplasmic reticulum</keyword>
<keyword id="KW-0472">Membrane</keyword>
<keyword id="KW-0536">Nodulation</keyword>
<keyword id="KW-0539">Nucleus</keyword>
<keyword id="KW-1185">Reference proteome</keyword>
<keyword id="KW-0804">Transcription</keyword>
<keyword id="KW-0805">Transcription regulation</keyword>